<proteinExistence type="inferred from homology"/>
<keyword id="KW-0067">ATP-binding</keyword>
<keyword id="KW-0436">Ligase</keyword>
<keyword id="KW-0547">Nucleotide-binding</keyword>
<keyword id="KW-0658">Purine biosynthesis</keyword>
<keyword id="KW-1185">Reference proteome</keyword>
<protein>
    <recommendedName>
        <fullName evidence="1">Phosphoribosylaminoimidazole-succinocarboxamide synthase</fullName>
        <ecNumber evidence="1">6.3.2.6</ecNumber>
    </recommendedName>
    <alternativeName>
        <fullName evidence="1">SAICAR synthetase</fullName>
    </alternativeName>
</protein>
<feature type="chain" id="PRO_1000096022" description="Phosphoribosylaminoimidazole-succinocarboxamide synthase">
    <location>
        <begin position="1"/>
        <end position="250"/>
    </location>
</feature>
<comment type="catalytic activity">
    <reaction evidence="1">
        <text>5-amino-1-(5-phospho-D-ribosyl)imidazole-4-carboxylate + L-aspartate + ATP = (2S)-2-[5-amino-1-(5-phospho-beta-D-ribosyl)imidazole-4-carboxamido]succinate + ADP + phosphate + 2 H(+)</text>
        <dbReference type="Rhea" id="RHEA:22628"/>
        <dbReference type="ChEBI" id="CHEBI:15378"/>
        <dbReference type="ChEBI" id="CHEBI:29991"/>
        <dbReference type="ChEBI" id="CHEBI:30616"/>
        <dbReference type="ChEBI" id="CHEBI:43474"/>
        <dbReference type="ChEBI" id="CHEBI:58443"/>
        <dbReference type="ChEBI" id="CHEBI:77657"/>
        <dbReference type="ChEBI" id="CHEBI:456216"/>
        <dbReference type="EC" id="6.3.2.6"/>
    </reaction>
</comment>
<comment type="pathway">
    <text evidence="1">Purine metabolism; IMP biosynthesis via de novo pathway; 5-amino-1-(5-phospho-D-ribosyl)imidazole-4-carboxamide from 5-amino-1-(5-phospho-D-ribosyl)imidazole-4-carboxylate: step 1/2.</text>
</comment>
<comment type="similarity">
    <text evidence="1">Belongs to the SAICAR synthetase family.</text>
</comment>
<name>PUR7_PICP2</name>
<evidence type="ECO:0000255" key="1">
    <source>
        <dbReference type="HAMAP-Rule" id="MF_00137"/>
    </source>
</evidence>
<sequence>MSEHHPEKRYEGKAKILYSTADSDVLLTYFKDDATAFNAQKKGTIQGKGEMNCTIAAALLQWLETQGIPTHFIEQTKADEMLVKAVKILPVEVVVRNIAAGSLCKQTGLAQGTVLPQPLVEFYLKDDNLGDPLLTRDRLMLLQIVTAEQLAQLQDYALRINGLMQGFFARCQITLVDFKIEFGTDKTGTILLADEISPDTCRLWDQTETDPNLRVMDKDRFRQDLGNIENAYQTVQARVLAQVQQLQSLA</sequence>
<organism>
    <name type="scientific">Picosynechococcus sp. (strain ATCC 27264 / PCC 7002 / PR-6)</name>
    <name type="common">Agmenellum quadruplicatum</name>
    <dbReference type="NCBI Taxonomy" id="32049"/>
    <lineage>
        <taxon>Bacteria</taxon>
        <taxon>Bacillati</taxon>
        <taxon>Cyanobacteriota</taxon>
        <taxon>Cyanophyceae</taxon>
        <taxon>Oscillatoriophycideae</taxon>
        <taxon>Chroococcales</taxon>
        <taxon>Geminocystaceae</taxon>
        <taxon>Picosynechococcus</taxon>
    </lineage>
</organism>
<reference key="1">
    <citation type="submission" date="2008-02" db="EMBL/GenBank/DDBJ databases">
        <title>Complete sequence of Synechococcus sp. PCC 7002.</title>
        <authorList>
            <person name="Li T."/>
            <person name="Zhao J."/>
            <person name="Zhao C."/>
            <person name="Liu Z."/>
            <person name="Zhao F."/>
            <person name="Marquardt J."/>
            <person name="Nomura C.T."/>
            <person name="Persson S."/>
            <person name="Detter J.C."/>
            <person name="Richardson P.M."/>
            <person name="Lanz C."/>
            <person name="Schuster S.C."/>
            <person name="Wang J."/>
            <person name="Li S."/>
            <person name="Huang X."/>
            <person name="Cai T."/>
            <person name="Yu Z."/>
            <person name="Luo J."/>
            <person name="Zhao J."/>
            <person name="Bryant D.A."/>
        </authorList>
    </citation>
    <scope>NUCLEOTIDE SEQUENCE [LARGE SCALE GENOMIC DNA]</scope>
    <source>
        <strain>ATCC 27264 / PCC 7002 / PR-6</strain>
    </source>
</reference>
<dbReference type="EC" id="6.3.2.6" evidence="1"/>
<dbReference type="EMBL" id="CP000951">
    <property type="protein sequence ID" value="ACA98327.1"/>
    <property type="molecule type" value="Genomic_DNA"/>
</dbReference>
<dbReference type="RefSeq" id="WP_012305951.1">
    <property type="nucleotide sequence ID" value="NZ_JAHHPU010000004.1"/>
</dbReference>
<dbReference type="SMR" id="B1XNE9"/>
<dbReference type="STRING" id="32049.SYNPCC7002_A0317"/>
<dbReference type="KEGG" id="syp:SYNPCC7002_A0317"/>
<dbReference type="eggNOG" id="COG0152">
    <property type="taxonomic scope" value="Bacteria"/>
</dbReference>
<dbReference type="HOGENOM" id="CLU_061495_2_0_3"/>
<dbReference type="UniPathway" id="UPA00074">
    <property type="reaction ID" value="UER00131"/>
</dbReference>
<dbReference type="Proteomes" id="UP000001688">
    <property type="component" value="Chromosome"/>
</dbReference>
<dbReference type="GO" id="GO:0005524">
    <property type="term" value="F:ATP binding"/>
    <property type="evidence" value="ECO:0007669"/>
    <property type="project" value="UniProtKB-KW"/>
</dbReference>
<dbReference type="GO" id="GO:0004639">
    <property type="term" value="F:phosphoribosylaminoimidazolesuccinocarboxamide synthase activity"/>
    <property type="evidence" value="ECO:0007669"/>
    <property type="project" value="UniProtKB-UniRule"/>
</dbReference>
<dbReference type="GO" id="GO:0006189">
    <property type="term" value="P:'de novo' IMP biosynthetic process"/>
    <property type="evidence" value="ECO:0007669"/>
    <property type="project" value="UniProtKB-UniRule"/>
</dbReference>
<dbReference type="GO" id="GO:0009236">
    <property type="term" value="P:cobalamin biosynthetic process"/>
    <property type="evidence" value="ECO:0007669"/>
    <property type="project" value="InterPro"/>
</dbReference>
<dbReference type="CDD" id="cd01415">
    <property type="entry name" value="SAICAR_synt_PurC"/>
    <property type="match status" value="1"/>
</dbReference>
<dbReference type="FunFam" id="3.30.470.20:FF:000006">
    <property type="entry name" value="Phosphoribosylaminoimidazole-succinocarboxamide synthase"/>
    <property type="match status" value="1"/>
</dbReference>
<dbReference type="Gene3D" id="3.30.470.20">
    <property type="entry name" value="ATP-grasp fold, B domain"/>
    <property type="match status" value="1"/>
</dbReference>
<dbReference type="Gene3D" id="3.30.200.20">
    <property type="entry name" value="Phosphorylase Kinase, domain 1"/>
    <property type="match status" value="1"/>
</dbReference>
<dbReference type="HAMAP" id="MF_00137">
    <property type="entry name" value="SAICAR_synth"/>
    <property type="match status" value="1"/>
</dbReference>
<dbReference type="InterPro" id="IPR028923">
    <property type="entry name" value="SAICAR_synt/ADE2_N"/>
</dbReference>
<dbReference type="InterPro" id="IPR033934">
    <property type="entry name" value="SAICAR_synt_PurC"/>
</dbReference>
<dbReference type="InterPro" id="IPR001636">
    <property type="entry name" value="SAICAR_synth"/>
</dbReference>
<dbReference type="InterPro" id="IPR050089">
    <property type="entry name" value="SAICAR_synthetase"/>
</dbReference>
<dbReference type="InterPro" id="IPR018236">
    <property type="entry name" value="SAICAR_synthetase_CS"/>
</dbReference>
<dbReference type="NCBIfam" id="TIGR00081">
    <property type="entry name" value="purC"/>
    <property type="match status" value="1"/>
</dbReference>
<dbReference type="PANTHER" id="PTHR43599">
    <property type="entry name" value="MULTIFUNCTIONAL PROTEIN ADE2"/>
    <property type="match status" value="1"/>
</dbReference>
<dbReference type="PANTHER" id="PTHR43599:SF3">
    <property type="entry name" value="SI:DKEY-6E2.2"/>
    <property type="match status" value="1"/>
</dbReference>
<dbReference type="Pfam" id="PF01259">
    <property type="entry name" value="SAICAR_synt"/>
    <property type="match status" value="1"/>
</dbReference>
<dbReference type="SUPFAM" id="SSF56104">
    <property type="entry name" value="SAICAR synthase-like"/>
    <property type="match status" value="1"/>
</dbReference>
<dbReference type="PROSITE" id="PS01057">
    <property type="entry name" value="SAICAR_SYNTHETASE_1"/>
    <property type="match status" value="1"/>
</dbReference>
<dbReference type="PROSITE" id="PS01058">
    <property type="entry name" value="SAICAR_SYNTHETASE_2"/>
    <property type="match status" value="1"/>
</dbReference>
<gene>
    <name evidence="1" type="primary">purC</name>
    <name type="ordered locus">SYNPCC7002_A0317</name>
</gene>
<accession>B1XNE9</accession>